<accession>Q5GV66</accession>
<feature type="chain" id="PRO_0000261830" description="Large ribosomal subunit protein uL13">
    <location>
        <begin position="1"/>
        <end position="142"/>
    </location>
</feature>
<organism>
    <name type="scientific">Xanthomonas oryzae pv. oryzae (strain KACC10331 / KXO85)</name>
    <dbReference type="NCBI Taxonomy" id="291331"/>
    <lineage>
        <taxon>Bacteria</taxon>
        <taxon>Pseudomonadati</taxon>
        <taxon>Pseudomonadota</taxon>
        <taxon>Gammaproteobacteria</taxon>
        <taxon>Lysobacterales</taxon>
        <taxon>Lysobacteraceae</taxon>
        <taxon>Xanthomonas</taxon>
    </lineage>
</organism>
<proteinExistence type="inferred from homology"/>
<evidence type="ECO:0000255" key="1">
    <source>
        <dbReference type="HAMAP-Rule" id="MF_01366"/>
    </source>
</evidence>
<evidence type="ECO:0000305" key="2"/>
<gene>
    <name evidence="1" type="primary">rplM</name>
    <name type="ordered locus">XOO4153</name>
</gene>
<protein>
    <recommendedName>
        <fullName evidence="1">Large ribosomal subunit protein uL13</fullName>
    </recommendedName>
    <alternativeName>
        <fullName evidence="2">50S ribosomal protein L13</fullName>
    </alternativeName>
</protein>
<sequence>MTTFTAKSETVQRDWYLVDAAGKTLGRLSTELARRLRGKHKPVYTPHVDTGDYLVVINAEKIVVTGNKLKDKKYHRFTGYIGNLKTESLEQALQRHPERVIEIAVKGMLPKGPMGRTMYRKLKVYSGAEHPHAAQQPQVLDI</sequence>
<comment type="function">
    <text evidence="1">This protein is one of the early assembly proteins of the 50S ribosomal subunit, although it is not seen to bind rRNA by itself. It is important during the early stages of 50S assembly.</text>
</comment>
<comment type="subunit">
    <text evidence="1">Part of the 50S ribosomal subunit.</text>
</comment>
<comment type="similarity">
    <text evidence="1">Belongs to the universal ribosomal protein uL13 family.</text>
</comment>
<keyword id="KW-1185">Reference proteome</keyword>
<keyword id="KW-0687">Ribonucleoprotein</keyword>
<keyword id="KW-0689">Ribosomal protein</keyword>
<name>RL13_XANOR</name>
<reference key="1">
    <citation type="journal article" date="2005" name="Nucleic Acids Res.">
        <title>The genome sequence of Xanthomonas oryzae pathovar oryzae KACC10331, the bacterial blight pathogen of rice.</title>
        <authorList>
            <person name="Lee B.-M."/>
            <person name="Park Y.-J."/>
            <person name="Park D.-S."/>
            <person name="Kang H.-W."/>
            <person name="Kim J.-G."/>
            <person name="Song E.-S."/>
            <person name="Park I.-C."/>
            <person name="Yoon U.-H."/>
            <person name="Hahn J.-H."/>
            <person name="Koo B.-S."/>
            <person name="Lee G.-B."/>
            <person name="Kim H."/>
            <person name="Park H.-S."/>
            <person name="Yoon K.-O."/>
            <person name="Kim J.-H."/>
            <person name="Jung C.-H."/>
            <person name="Koh N.-H."/>
            <person name="Seo J.-S."/>
            <person name="Go S.-J."/>
        </authorList>
    </citation>
    <scope>NUCLEOTIDE SEQUENCE [LARGE SCALE GENOMIC DNA]</scope>
    <source>
        <strain>KACC10331 / KXO85</strain>
    </source>
</reference>
<dbReference type="EMBL" id="AE013598">
    <property type="protein sequence ID" value="AAW77407.1"/>
    <property type="molecule type" value="Genomic_DNA"/>
</dbReference>
<dbReference type="SMR" id="Q5GV66"/>
<dbReference type="STRING" id="291331.XOO4153"/>
<dbReference type="KEGG" id="xoo:XOO4153"/>
<dbReference type="HOGENOM" id="CLU_082184_2_2_6"/>
<dbReference type="Proteomes" id="UP000006735">
    <property type="component" value="Chromosome"/>
</dbReference>
<dbReference type="GO" id="GO:0022625">
    <property type="term" value="C:cytosolic large ribosomal subunit"/>
    <property type="evidence" value="ECO:0007669"/>
    <property type="project" value="TreeGrafter"/>
</dbReference>
<dbReference type="GO" id="GO:0003729">
    <property type="term" value="F:mRNA binding"/>
    <property type="evidence" value="ECO:0007669"/>
    <property type="project" value="TreeGrafter"/>
</dbReference>
<dbReference type="GO" id="GO:0003735">
    <property type="term" value="F:structural constituent of ribosome"/>
    <property type="evidence" value="ECO:0007669"/>
    <property type="project" value="InterPro"/>
</dbReference>
<dbReference type="GO" id="GO:0017148">
    <property type="term" value="P:negative regulation of translation"/>
    <property type="evidence" value="ECO:0007669"/>
    <property type="project" value="TreeGrafter"/>
</dbReference>
<dbReference type="GO" id="GO:0006412">
    <property type="term" value="P:translation"/>
    <property type="evidence" value="ECO:0007669"/>
    <property type="project" value="UniProtKB-UniRule"/>
</dbReference>
<dbReference type="CDD" id="cd00392">
    <property type="entry name" value="Ribosomal_L13"/>
    <property type="match status" value="1"/>
</dbReference>
<dbReference type="FunFam" id="3.90.1180.10:FF:000001">
    <property type="entry name" value="50S ribosomal protein L13"/>
    <property type="match status" value="1"/>
</dbReference>
<dbReference type="Gene3D" id="3.90.1180.10">
    <property type="entry name" value="Ribosomal protein L13"/>
    <property type="match status" value="1"/>
</dbReference>
<dbReference type="HAMAP" id="MF_01366">
    <property type="entry name" value="Ribosomal_uL13"/>
    <property type="match status" value="1"/>
</dbReference>
<dbReference type="InterPro" id="IPR005822">
    <property type="entry name" value="Ribosomal_uL13"/>
</dbReference>
<dbReference type="InterPro" id="IPR005823">
    <property type="entry name" value="Ribosomal_uL13_bac-type"/>
</dbReference>
<dbReference type="InterPro" id="IPR023563">
    <property type="entry name" value="Ribosomal_uL13_CS"/>
</dbReference>
<dbReference type="InterPro" id="IPR036899">
    <property type="entry name" value="Ribosomal_uL13_sf"/>
</dbReference>
<dbReference type="NCBIfam" id="TIGR01066">
    <property type="entry name" value="rplM_bact"/>
    <property type="match status" value="1"/>
</dbReference>
<dbReference type="PANTHER" id="PTHR11545:SF2">
    <property type="entry name" value="LARGE RIBOSOMAL SUBUNIT PROTEIN UL13M"/>
    <property type="match status" value="1"/>
</dbReference>
<dbReference type="PANTHER" id="PTHR11545">
    <property type="entry name" value="RIBOSOMAL PROTEIN L13"/>
    <property type="match status" value="1"/>
</dbReference>
<dbReference type="Pfam" id="PF00572">
    <property type="entry name" value="Ribosomal_L13"/>
    <property type="match status" value="1"/>
</dbReference>
<dbReference type="PIRSF" id="PIRSF002181">
    <property type="entry name" value="Ribosomal_L13"/>
    <property type="match status" value="1"/>
</dbReference>
<dbReference type="SUPFAM" id="SSF52161">
    <property type="entry name" value="Ribosomal protein L13"/>
    <property type="match status" value="1"/>
</dbReference>
<dbReference type="PROSITE" id="PS00783">
    <property type="entry name" value="RIBOSOMAL_L13"/>
    <property type="match status" value="1"/>
</dbReference>